<sequence length="1248" mass="143487">MANGFKFTPAQQKAIEDTGKNILVAASAGSGKTRVLVERVINKIKQGVSIDELLVVTFTEAAAKEMKERIQIALRKELSTADSEEEKRRYLTQLSKLNVANISTLHAFCLQIIKQYYYVINLDPMFRMLTEDTEVALLQENVWDDLREKWYSKKSPEFENLVVNFSSDRNDDGLSELVMKTYQFANANPNPDEWLNNLVSEYDLGDQPLMESNFYQNKIKPNVLDQIQLAKDNLKQGMDEANKLGLEKLYQTFEQDCATIDELQDFVVGCKEWNNLKTTLQNFKFKRAKSDRGLDDDQKKQKERINKTLRDGSKKIIEDLSVKYFALPEDEIKELTQKSKQIVETLSEVVKEFGAEFSKEKRRRHVLDFSDLEHLTLQILNTDTPDGRRVKERLKNKFKEIMVDEYQDTNQLQETILTTIAHKNPGNMFMVGDVKQSIYGFRLADPGLFLKKYQSFATDDNDDERIILAENFRSMENVTAFTNLIFSQLMDEKVGEMAYDEDARLVYGAKYYPEETPIKAEVLVYESEDSSQESDDEPVNEDFSIDNKAQGQIVMTAKRIKELVENGEKIYDKKQGTIRPIEYRDIAILAPTRKNNLILTEEFKRLGVPIFVPDAQNYFQTTELKIMMSFLQIIDNPYQDIPLVAVLRSPIVGLKENELAYLRINDKTGDYFQAVESFYDNFEVEKASAFAQSLYEKIAIFLKQLTEFRNMAQQNELASLIWKIYEETGFLDYVGGMPGGLQRQANLHALYERAAEYEEMSFKGLFQFVRFINKMQTKNKDLSEATTQVSDDAVTVMTIHGSKGLEFPVVFLLDATHKFNVGDLNKPYLLNADDGIGISYLDPDTRVKTDTLMKVIAGKQALKKLAAEQMRLLYVALTRAEQQLFIVGSYKDKNEALSKWKKATQSESLVLNAGIRASVRNFMDWIGMCLTRSEIFKEVDDTVDAKEPEYIGELPVKFEVKFYSNQDLRGENITLDENSESWLKQQLKKIEEQEPLEINDKQYRIIDKILQSKYPNESLAKTTAYQAVSDLKRAFDDPDNNMMQSLEIDWQDQVPQGINRYVQNELSLPKFMTTKVKVSPAQVGIATHLLLQKLPLDDEVTLEELMQLLAQLVEDKLITSEVAKEINLNQIKVFYTSDLGRKVLKNKDKVKRELPFAMIIPAGRLFSNVDNDVEQPILVHGIIDGLIELDDEVIIFDYKTDHHTSEDKLIENYRGQLNLYAMAVESMLNKKVSQKIIYSLDLGKSIVL</sequence>
<evidence type="ECO:0000255" key="1">
    <source>
        <dbReference type="HAMAP-Rule" id="MF_01451"/>
    </source>
</evidence>
<dbReference type="EC" id="3.1.-.-" evidence="1"/>
<dbReference type="EC" id="5.6.2.4" evidence="1"/>
<dbReference type="EMBL" id="CP000233">
    <property type="protein sequence ID" value="ABE00409.1"/>
    <property type="molecule type" value="Genomic_DNA"/>
</dbReference>
<dbReference type="RefSeq" id="WP_011476466.1">
    <property type="nucleotide sequence ID" value="NC_007929.1"/>
</dbReference>
<dbReference type="RefSeq" id="YP_536492.1">
    <property type="nucleotide sequence ID" value="NC_007929.1"/>
</dbReference>
<dbReference type="SMR" id="Q1WRS0"/>
<dbReference type="STRING" id="362948.LSL_1607"/>
<dbReference type="KEGG" id="lsl:LSL_1607"/>
<dbReference type="PATRIC" id="fig|362948.14.peg.1702"/>
<dbReference type="HOGENOM" id="CLU_001114_3_1_9"/>
<dbReference type="OrthoDB" id="9810135at2"/>
<dbReference type="Proteomes" id="UP000006559">
    <property type="component" value="Chromosome"/>
</dbReference>
<dbReference type="GO" id="GO:0005829">
    <property type="term" value="C:cytosol"/>
    <property type="evidence" value="ECO:0007669"/>
    <property type="project" value="TreeGrafter"/>
</dbReference>
<dbReference type="GO" id="GO:0033202">
    <property type="term" value="C:DNA helicase complex"/>
    <property type="evidence" value="ECO:0007669"/>
    <property type="project" value="TreeGrafter"/>
</dbReference>
<dbReference type="GO" id="GO:0043138">
    <property type="term" value="F:3'-5' DNA helicase activity"/>
    <property type="evidence" value="ECO:0007669"/>
    <property type="project" value="UniProtKB-UniRule"/>
</dbReference>
<dbReference type="GO" id="GO:0008408">
    <property type="term" value="F:3'-5' exonuclease activity"/>
    <property type="evidence" value="ECO:0007669"/>
    <property type="project" value="UniProtKB-UniRule"/>
</dbReference>
<dbReference type="GO" id="GO:0005524">
    <property type="term" value="F:ATP binding"/>
    <property type="evidence" value="ECO:0007669"/>
    <property type="project" value="UniProtKB-UniRule"/>
</dbReference>
<dbReference type="GO" id="GO:0016887">
    <property type="term" value="F:ATP hydrolysis activity"/>
    <property type="evidence" value="ECO:0007669"/>
    <property type="project" value="RHEA"/>
</dbReference>
<dbReference type="GO" id="GO:0003690">
    <property type="term" value="F:double-stranded DNA binding"/>
    <property type="evidence" value="ECO:0007669"/>
    <property type="project" value="UniProtKB-UniRule"/>
</dbReference>
<dbReference type="GO" id="GO:0000724">
    <property type="term" value="P:double-strand break repair via homologous recombination"/>
    <property type="evidence" value="ECO:0007669"/>
    <property type="project" value="UniProtKB-UniRule"/>
</dbReference>
<dbReference type="CDD" id="cd17932">
    <property type="entry name" value="DEXQc_UvrD"/>
    <property type="match status" value="2"/>
</dbReference>
<dbReference type="Gene3D" id="1.10.274.50">
    <property type="match status" value="1"/>
</dbReference>
<dbReference type="Gene3D" id="3.90.320.10">
    <property type="match status" value="1"/>
</dbReference>
<dbReference type="Gene3D" id="3.40.50.300">
    <property type="entry name" value="P-loop containing nucleotide triphosphate hydrolases"/>
    <property type="match status" value="4"/>
</dbReference>
<dbReference type="HAMAP" id="MF_01451">
    <property type="entry name" value="AddA"/>
    <property type="match status" value="1"/>
</dbReference>
<dbReference type="InterPro" id="IPR014152">
    <property type="entry name" value="AddA"/>
</dbReference>
<dbReference type="InterPro" id="IPR014017">
    <property type="entry name" value="DNA_helicase_UvrD-like_C"/>
</dbReference>
<dbReference type="InterPro" id="IPR000212">
    <property type="entry name" value="DNA_helicase_UvrD/REP"/>
</dbReference>
<dbReference type="InterPro" id="IPR027417">
    <property type="entry name" value="P-loop_NTPase"/>
</dbReference>
<dbReference type="InterPro" id="IPR011604">
    <property type="entry name" value="PDDEXK-like_dom_sf"/>
</dbReference>
<dbReference type="InterPro" id="IPR038726">
    <property type="entry name" value="PDDEXK_AddAB-type"/>
</dbReference>
<dbReference type="InterPro" id="IPR011335">
    <property type="entry name" value="Restrct_endonuc-II-like"/>
</dbReference>
<dbReference type="InterPro" id="IPR014016">
    <property type="entry name" value="UvrD-like_ATP-bd"/>
</dbReference>
<dbReference type="NCBIfam" id="TIGR02785">
    <property type="entry name" value="addA_Gpos"/>
    <property type="match status" value="1"/>
</dbReference>
<dbReference type="PANTHER" id="PTHR11070:SF48">
    <property type="entry name" value="ATP-DEPENDENT HELICASE_NUCLEASE SUBUNIT A"/>
    <property type="match status" value="1"/>
</dbReference>
<dbReference type="PANTHER" id="PTHR11070">
    <property type="entry name" value="UVRD / RECB / PCRA DNA HELICASE FAMILY MEMBER"/>
    <property type="match status" value="1"/>
</dbReference>
<dbReference type="Pfam" id="PF12705">
    <property type="entry name" value="PDDEXK_1"/>
    <property type="match status" value="1"/>
</dbReference>
<dbReference type="Pfam" id="PF00580">
    <property type="entry name" value="UvrD-helicase"/>
    <property type="match status" value="1"/>
</dbReference>
<dbReference type="Pfam" id="PF13361">
    <property type="entry name" value="UvrD_C"/>
    <property type="match status" value="1"/>
</dbReference>
<dbReference type="SUPFAM" id="SSF52540">
    <property type="entry name" value="P-loop containing nucleoside triphosphate hydrolases"/>
    <property type="match status" value="1"/>
</dbReference>
<dbReference type="SUPFAM" id="SSF52980">
    <property type="entry name" value="Restriction endonuclease-like"/>
    <property type="match status" value="1"/>
</dbReference>
<dbReference type="PROSITE" id="PS51198">
    <property type="entry name" value="UVRD_HELICASE_ATP_BIND"/>
    <property type="match status" value="1"/>
</dbReference>
<dbReference type="PROSITE" id="PS51217">
    <property type="entry name" value="UVRD_HELICASE_CTER"/>
    <property type="match status" value="1"/>
</dbReference>
<name>ADDA_LIGS1</name>
<comment type="function">
    <text evidence="1">The heterodimer acts as both an ATP-dependent DNA helicase and an ATP-dependent, dual-direction single-stranded exonuclease. Recognizes the chi site generating a DNA molecule suitable for the initiation of homologous recombination. The AddA nuclease domain is required for chi fragment generation; this subunit has the helicase and 3' -&gt; 5' nuclease activities.</text>
</comment>
<comment type="catalytic activity">
    <reaction evidence="1">
        <text>Couples ATP hydrolysis with the unwinding of duplex DNA by translocating in the 3'-5' direction.</text>
        <dbReference type="EC" id="5.6.2.4"/>
    </reaction>
</comment>
<comment type="catalytic activity">
    <reaction evidence="1">
        <text>ATP + H2O = ADP + phosphate + H(+)</text>
        <dbReference type="Rhea" id="RHEA:13065"/>
        <dbReference type="ChEBI" id="CHEBI:15377"/>
        <dbReference type="ChEBI" id="CHEBI:15378"/>
        <dbReference type="ChEBI" id="CHEBI:30616"/>
        <dbReference type="ChEBI" id="CHEBI:43474"/>
        <dbReference type="ChEBI" id="CHEBI:456216"/>
        <dbReference type="EC" id="5.6.2.4"/>
    </reaction>
</comment>
<comment type="cofactor">
    <cofactor evidence="1">
        <name>Mg(2+)</name>
        <dbReference type="ChEBI" id="CHEBI:18420"/>
    </cofactor>
</comment>
<comment type="subunit">
    <text evidence="1">Heterodimer of AddA and AddB/RexB.</text>
</comment>
<comment type="similarity">
    <text evidence="1">Belongs to the helicase family. AddA subfamily.</text>
</comment>
<organism>
    <name type="scientific">Ligilactobacillus salivarius (strain UCC118)</name>
    <name type="common">Lactobacillus salivarius</name>
    <dbReference type="NCBI Taxonomy" id="362948"/>
    <lineage>
        <taxon>Bacteria</taxon>
        <taxon>Bacillati</taxon>
        <taxon>Bacillota</taxon>
        <taxon>Bacilli</taxon>
        <taxon>Lactobacillales</taxon>
        <taxon>Lactobacillaceae</taxon>
        <taxon>Ligilactobacillus</taxon>
    </lineage>
</organism>
<gene>
    <name evidence="1" type="primary">addA</name>
    <name type="ordered locus">LSL_1607</name>
</gene>
<feature type="chain" id="PRO_0000379289" description="ATP-dependent helicase/nuclease subunit A">
    <location>
        <begin position="1"/>
        <end position="1248"/>
    </location>
</feature>
<feature type="domain" description="UvrD-like helicase ATP-binding" evidence="1">
    <location>
        <begin position="5"/>
        <end position="475"/>
    </location>
</feature>
<feature type="domain" description="UvrD-like helicase C-terminal" evidence="1">
    <location>
        <begin position="508"/>
        <end position="804"/>
    </location>
</feature>
<feature type="binding site" evidence="1">
    <location>
        <begin position="26"/>
        <end position="33"/>
    </location>
    <ligand>
        <name>ATP</name>
        <dbReference type="ChEBI" id="CHEBI:30616"/>
    </ligand>
</feature>
<accession>Q1WRS0</accession>
<keyword id="KW-0067">ATP-binding</keyword>
<keyword id="KW-0227">DNA damage</keyword>
<keyword id="KW-0234">DNA repair</keyword>
<keyword id="KW-0238">DNA-binding</keyword>
<keyword id="KW-0269">Exonuclease</keyword>
<keyword id="KW-0347">Helicase</keyword>
<keyword id="KW-0378">Hydrolase</keyword>
<keyword id="KW-0413">Isomerase</keyword>
<keyword id="KW-0540">Nuclease</keyword>
<keyword id="KW-0547">Nucleotide-binding</keyword>
<keyword id="KW-1185">Reference proteome</keyword>
<proteinExistence type="inferred from homology"/>
<reference key="1">
    <citation type="journal article" date="2006" name="Proc. Natl. Acad. Sci. U.S.A.">
        <title>Multireplicon genome architecture of Lactobacillus salivarius.</title>
        <authorList>
            <person name="Claesson M.J."/>
            <person name="Li Y."/>
            <person name="Leahy S."/>
            <person name="Canchaya C."/>
            <person name="van Pijkeren J.P."/>
            <person name="Cerdeno-Tarraga A.M."/>
            <person name="Parkhill J."/>
            <person name="Flynn S."/>
            <person name="O'Sullivan G.C."/>
            <person name="Collins J.K."/>
            <person name="Higgins D."/>
            <person name="Shanahan F."/>
            <person name="Fitzgerald G.F."/>
            <person name="van Sinderen D."/>
            <person name="O'Toole P.W."/>
        </authorList>
    </citation>
    <scope>NUCLEOTIDE SEQUENCE [LARGE SCALE GENOMIC DNA]</scope>
    <source>
        <strain>UCC118</strain>
    </source>
</reference>
<protein>
    <recommendedName>
        <fullName evidence="1">ATP-dependent helicase/nuclease subunit A</fullName>
        <ecNumber evidence="1">3.1.-.-</ecNumber>
        <ecNumber evidence="1">5.6.2.4</ecNumber>
    </recommendedName>
    <alternativeName>
        <fullName evidence="1">ATP-dependent helicase/nuclease AddA</fullName>
    </alternativeName>
    <alternativeName>
        <fullName evidence="1">DNA 3'-5' helicase AddA</fullName>
    </alternativeName>
</protein>